<protein>
    <recommendedName>
        <fullName evidence="1">Leucine--tRNA ligase</fullName>
        <ecNumber evidence="1">6.1.1.4</ecNumber>
    </recommendedName>
    <alternativeName>
        <fullName evidence="1">Leucyl-tRNA synthetase</fullName>
        <shortName evidence="1">LeuRS</shortName>
    </alternativeName>
</protein>
<comment type="catalytic activity">
    <reaction evidence="1">
        <text>tRNA(Leu) + L-leucine + ATP = L-leucyl-tRNA(Leu) + AMP + diphosphate</text>
        <dbReference type="Rhea" id="RHEA:11688"/>
        <dbReference type="Rhea" id="RHEA-COMP:9613"/>
        <dbReference type="Rhea" id="RHEA-COMP:9622"/>
        <dbReference type="ChEBI" id="CHEBI:30616"/>
        <dbReference type="ChEBI" id="CHEBI:33019"/>
        <dbReference type="ChEBI" id="CHEBI:57427"/>
        <dbReference type="ChEBI" id="CHEBI:78442"/>
        <dbReference type="ChEBI" id="CHEBI:78494"/>
        <dbReference type="ChEBI" id="CHEBI:456215"/>
        <dbReference type="EC" id="6.1.1.4"/>
    </reaction>
</comment>
<comment type="subcellular location">
    <subcellularLocation>
        <location evidence="1">Cytoplasm</location>
    </subcellularLocation>
</comment>
<comment type="similarity">
    <text evidence="1">Belongs to the class-I aminoacyl-tRNA synthetase family.</text>
</comment>
<organism>
    <name type="scientific">Methanococcus maripaludis (strain C7 / ATCC BAA-1331)</name>
    <dbReference type="NCBI Taxonomy" id="426368"/>
    <lineage>
        <taxon>Archaea</taxon>
        <taxon>Methanobacteriati</taxon>
        <taxon>Methanobacteriota</taxon>
        <taxon>Methanomada group</taxon>
        <taxon>Methanococci</taxon>
        <taxon>Methanococcales</taxon>
        <taxon>Methanococcaceae</taxon>
        <taxon>Methanococcus</taxon>
    </lineage>
</organism>
<name>SYL_METM7</name>
<accession>A6VK04</accession>
<evidence type="ECO:0000255" key="1">
    <source>
        <dbReference type="HAMAP-Rule" id="MF_00049"/>
    </source>
</evidence>
<reference key="1">
    <citation type="submission" date="2007-06" db="EMBL/GenBank/DDBJ databases">
        <title>Complete sequence of Methanococcus maripaludis C7.</title>
        <authorList>
            <consortium name="US DOE Joint Genome Institute"/>
            <person name="Copeland A."/>
            <person name="Lucas S."/>
            <person name="Lapidus A."/>
            <person name="Barry K."/>
            <person name="Glavina del Rio T."/>
            <person name="Dalin E."/>
            <person name="Tice H."/>
            <person name="Pitluck S."/>
            <person name="Clum A."/>
            <person name="Schmutz J."/>
            <person name="Larimer F."/>
            <person name="Land M."/>
            <person name="Hauser L."/>
            <person name="Kyrpides N."/>
            <person name="Anderson I."/>
            <person name="Sieprawska-Lupa M."/>
            <person name="Whitman W.B."/>
            <person name="Richardson P."/>
        </authorList>
    </citation>
    <scope>NUCLEOTIDE SEQUENCE [LARGE SCALE GENOMIC DNA]</scope>
    <source>
        <strain>C7 / ATCC BAA-1331</strain>
    </source>
</reference>
<dbReference type="EC" id="6.1.1.4" evidence="1"/>
<dbReference type="EMBL" id="CP000745">
    <property type="protein sequence ID" value="ABR66780.1"/>
    <property type="molecule type" value="Genomic_DNA"/>
</dbReference>
<dbReference type="SMR" id="A6VK04"/>
<dbReference type="STRING" id="426368.MmarC7_1724"/>
<dbReference type="KEGG" id="mmz:MmarC7_1724"/>
<dbReference type="eggNOG" id="arCOG00809">
    <property type="taxonomic scope" value="Archaea"/>
</dbReference>
<dbReference type="HOGENOM" id="CLU_004174_0_0_2"/>
<dbReference type="OrthoDB" id="23906at2157"/>
<dbReference type="GO" id="GO:0005737">
    <property type="term" value="C:cytoplasm"/>
    <property type="evidence" value="ECO:0007669"/>
    <property type="project" value="UniProtKB-SubCell"/>
</dbReference>
<dbReference type="GO" id="GO:0002161">
    <property type="term" value="F:aminoacyl-tRNA deacylase activity"/>
    <property type="evidence" value="ECO:0007669"/>
    <property type="project" value="InterPro"/>
</dbReference>
<dbReference type="GO" id="GO:0005524">
    <property type="term" value="F:ATP binding"/>
    <property type="evidence" value="ECO:0007669"/>
    <property type="project" value="UniProtKB-UniRule"/>
</dbReference>
<dbReference type="GO" id="GO:0004823">
    <property type="term" value="F:leucine-tRNA ligase activity"/>
    <property type="evidence" value="ECO:0007669"/>
    <property type="project" value="UniProtKB-UniRule"/>
</dbReference>
<dbReference type="GO" id="GO:0006429">
    <property type="term" value="P:leucyl-tRNA aminoacylation"/>
    <property type="evidence" value="ECO:0007669"/>
    <property type="project" value="UniProtKB-UniRule"/>
</dbReference>
<dbReference type="CDD" id="cd07959">
    <property type="entry name" value="Anticodon_Ia_Leu_AEc"/>
    <property type="match status" value="1"/>
</dbReference>
<dbReference type="FunFam" id="1.10.730.10:FF:000051">
    <property type="entry name" value="Leucine--tRNA ligase"/>
    <property type="match status" value="1"/>
</dbReference>
<dbReference type="Gene3D" id="3.30.2320.20">
    <property type="entry name" value="Class I aminoacyl-tRNA synthetases (RS)"/>
    <property type="match status" value="1"/>
</dbReference>
<dbReference type="Gene3D" id="3.40.50.620">
    <property type="entry name" value="HUPs"/>
    <property type="match status" value="1"/>
</dbReference>
<dbReference type="Gene3D" id="1.10.730.10">
    <property type="entry name" value="Isoleucyl-tRNA Synthetase, Domain 1"/>
    <property type="match status" value="1"/>
</dbReference>
<dbReference type="Gene3D" id="1.10.10.720">
    <property type="entry name" value="leucyl-tRNA synthetase"/>
    <property type="match status" value="1"/>
</dbReference>
<dbReference type="Gene3D" id="3.90.740.10">
    <property type="entry name" value="Valyl/Leucyl/Isoleucyl-tRNA synthetase, editing domain"/>
    <property type="match status" value="1"/>
</dbReference>
<dbReference type="HAMAP" id="MF_00049_A">
    <property type="entry name" value="Leu_tRNA_synth_A"/>
    <property type="match status" value="1"/>
</dbReference>
<dbReference type="InterPro" id="IPR001412">
    <property type="entry name" value="aa-tRNA-synth_I_CS"/>
</dbReference>
<dbReference type="InterPro" id="IPR002300">
    <property type="entry name" value="aa-tRNA-synth_Ia"/>
</dbReference>
<dbReference type="InterPro" id="IPR020791">
    <property type="entry name" value="Leu-tRNA-lgase_arc"/>
</dbReference>
<dbReference type="InterPro" id="IPR004493">
    <property type="entry name" value="Leu-tRNA-synth_Ia_arc/euk"/>
</dbReference>
<dbReference type="InterPro" id="IPR013155">
    <property type="entry name" value="M/V/L/I-tRNA-synth_anticd-bd"/>
</dbReference>
<dbReference type="InterPro" id="IPR015413">
    <property type="entry name" value="Methionyl/Leucyl_tRNA_Synth"/>
</dbReference>
<dbReference type="InterPro" id="IPR014729">
    <property type="entry name" value="Rossmann-like_a/b/a_fold"/>
</dbReference>
<dbReference type="InterPro" id="IPR009080">
    <property type="entry name" value="tRNAsynth_Ia_anticodon-bd"/>
</dbReference>
<dbReference type="InterPro" id="IPR009008">
    <property type="entry name" value="Val/Leu/Ile-tRNA-synth_edit"/>
</dbReference>
<dbReference type="NCBIfam" id="TIGR00395">
    <property type="entry name" value="leuS_arch"/>
    <property type="match status" value="1"/>
</dbReference>
<dbReference type="NCBIfam" id="NF008957">
    <property type="entry name" value="PRK12300.1"/>
    <property type="match status" value="1"/>
</dbReference>
<dbReference type="PANTHER" id="PTHR45794:SF1">
    <property type="entry name" value="LEUCINE--TRNA LIGASE, CYTOPLASMIC"/>
    <property type="match status" value="1"/>
</dbReference>
<dbReference type="PANTHER" id="PTHR45794">
    <property type="entry name" value="LEUCYL-TRNA SYNTHETASE"/>
    <property type="match status" value="1"/>
</dbReference>
<dbReference type="Pfam" id="PF08264">
    <property type="entry name" value="Anticodon_1"/>
    <property type="match status" value="1"/>
</dbReference>
<dbReference type="Pfam" id="PF00133">
    <property type="entry name" value="tRNA-synt_1"/>
    <property type="match status" value="1"/>
</dbReference>
<dbReference type="Pfam" id="PF09334">
    <property type="entry name" value="tRNA-synt_1g"/>
    <property type="match status" value="1"/>
</dbReference>
<dbReference type="SUPFAM" id="SSF47323">
    <property type="entry name" value="Anticodon-binding domain of a subclass of class I aminoacyl-tRNA synthetases"/>
    <property type="match status" value="1"/>
</dbReference>
<dbReference type="SUPFAM" id="SSF52374">
    <property type="entry name" value="Nucleotidylyl transferase"/>
    <property type="match status" value="1"/>
</dbReference>
<dbReference type="SUPFAM" id="SSF50677">
    <property type="entry name" value="ValRS/IleRS/LeuRS editing domain"/>
    <property type="match status" value="1"/>
</dbReference>
<dbReference type="PROSITE" id="PS00178">
    <property type="entry name" value="AA_TRNA_LIGASE_I"/>
    <property type="match status" value="1"/>
</dbReference>
<proteinExistence type="inferred from homology"/>
<gene>
    <name evidence="1" type="primary">leuS</name>
    <name type="ordered locus">MmarC7_1724</name>
</gene>
<feature type="chain" id="PRO_0000334845" description="Leucine--tRNA ligase">
    <location>
        <begin position="1"/>
        <end position="955"/>
    </location>
</feature>
<feature type="short sequence motif" description="'HIGH' region">
    <location>
        <begin position="51"/>
        <end position="61"/>
    </location>
</feature>
<feature type="short sequence motif" description="'KMSKS' region">
    <location>
        <begin position="647"/>
        <end position="651"/>
    </location>
</feature>
<feature type="binding site" evidence="1">
    <location>
        <position position="650"/>
    </location>
    <ligand>
        <name>ATP</name>
        <dbReference type="ChEBI" id="CHEBI:30616"/>
    </ligand>
</feature>
<keyword id="KW-0030">Aminoacyl-tRNA synthetase</keyword>
<keyword id="KW-0067">ATP-binding</keyword>
<keyword id="KW-0963">Cytoplasm</keyword>
<keyword id="KW-0436">Ligase</keyword>
<keyword id="KW-0547">Nucleotide-binding</keyword>
<keyword id="KW-0648">Protein biosynthesis</keyword>
<sequence>MDQNGVNAGNGHKSIDLIQIMDKWQKKWTEAKIFEAEHDLRDKFFITAAFPYLNGVLHAGHLRTFTIPETIARYQRMKNKNVLWTFGFHVTGTPILGLANQIKERKEDIIWAYNNLHNIPMDELIKLDTPEAIVECFSKKATEAFKRMGFSLDWRRNFKTDDKVFSKFIEWQFYKLKEMGHITKGSHPVRYCPKCENPVEDHDLLHGEESTTVEYSLIKFTSEFDGKEIIMPMATLRPETLFGVTNAWVNPNEMYVMAEVYDEIQKLDSEDVDLKYNGIWIVGKECADKLKEQDRKIEILKEIKGSELLGLKIKNPVTKKEVPLFPADFVEMGIGTGCVMGVPAHAPYDYIALRDLGKIEEVGLIPLIEIEGYDKFPAKEIVEKLGVKDQNDDELLEQATSKIYKDEFHKGKLNENCGEYAGISVKDIKEKLTKDYLNSNIAEIMYEFSEQKVVCRCGEKCIIKTVKGQWFINYSDENWKKLAHECIDSMNFAPENIRQEFHNKVDWMKDKACARKKGLGTLLPFDENWIIESLSDSTIYMAYYTIARFINEGLTPEQLVPELFEYVFLGNGNVEEIAKNSNISKETIEEMRKEFLYYYPLDWRCSAKDLIPNHLTFMIFNHVALFKKEHWPRGIEINGYVTIEGKKLSKSKGPVLPVSEVAENFGADVARFYITTCAELPQDADVKFKEMEKARDNLIKLYELAVSVMEEESTQKEFSLIDKWLLHKTYSSIKGAETAYEEFQLRKIGLMFYELINDLRWYKRRGGENNNVLKEVVEIWTKLLSPVTPHLCEEIWEKLGYSGFISQEMYPEIKSELINEDLELGEEFIKSAMEDIRNIKGVAKINPEKMYLYTADDWKYDLLEFMNENSEKNVKAIIPLVMKEDKFKRHGKEVMKLINEIMKIGVKKAIAEVEILENAKTFIESEFDCEVIVNGEDVKGKKKFAIPYKPAIYME</sequence>